<protein>
    <recommendedName>
        <fullName>Nucleolar protein 9</fullName>
    </recommendedName>
    <alternativeName>
        <fullName>Pumilio domain-containing protein NOP9</fullName>
    </alternativeName>
</protein>
<proteinExistence type="inferred from homology"/>
<organism>
    <name type="scientific">Arthroderma benhamiae (strain ATCC MYA-4681 / CBS 112371)</name>
    <name type="common">Trichophyton mentagrophytes</name>
    <dbReference type="NCBI Taxonomy" id="663331"/>
    <lineage>
        <taxon>Eukaryota</taxon>
        <taxon>Fungi</taxon>
        <taxon>Dikarya</taxon>
        <taxon>Ascomycota</taxon>
        <taxon>Pezizomycotina</taxon>
        <taxon>Eurotiomycetes</taxon>
        <taxon>Eurotiomycetidae</taxon>
        <taxon>Onygenales</taxon>
        <taxon>Arthrodermataceae</taxon>
        <taxon>Trichophyton</taxon>
    </lineage>
</organism>
<accession>D4AMF9</accession>
<evidence type="ECO:0000250" key="1"/>
<evidence type="ECO:0000256" key="2">
    <source>
        <dbReference type="SAM" id="MobiDB-lite"/>
    </source>
</evidence>
<evidence type="ECO:0000305" key="3"/>
<name>NOP9_ARTBC</name>
<sequence>MPREKKKRGRRAEKSQSKRKREDEEVSDSPKRQRTTNEDNDALAGDDYIPLDTHDTEKEQEQGQEDDTPFYGLLDTEEQEYFSKASQTLELNSFEDDDDKRLFIESVYTEAKGKELKIACSQSCSRLMEKLIAMSTPAQVKALFEKFSGHFLHLVQHRFASHCCECLFIRAAPIVTSEMEKPKDKKKDRKQTIETNGEDGELDEPINQKPAMDLFLGVVSELEGNWGYLLTESFASHTIRVLLLILAGEPLADHSNARVLASRKKENVDSITSTAQAELTIRESRQVPAEFNNTLRKMISDLSAGLNSTYLQALATHPIGSPVLQVILSIELGCMGKEKVKDKSSVFRRLIPDDTLETKEEGVNFLNSLFYDPVGSRLLETIVRVAPGKFFKTFYKTVIRERIGSLARNEIASYVVIKVLERVSREDLQSAIESILPEIPSLVQRSRLNVIKTIIDRSTVRSADTTSLAKALESAYGEDGLVRLKTILGVEATDKDAESVKPKAATSAQHLHGSLLAQSMLQAPGGLATMIQTSFLAAPVEILIQIAKNPTASRALQEALKPSKSNTQFRRQLLPRFYGQMCDLSLDNSGSHVADALWDATSDLVFIKQRLAQELADNESALRDSFLGRAVWRNWSMDLYKRKRGEWMSRAKGLDNTRVSAPTADSSAEPAKSKLDLARARYAARAEQQEKPDSREQGPRGKKQALSAPSGLLKAQ</sequence>
<keyword id="KW-0539">Nucleus</keyword>
<keyword id="KW-1185">Reference proteome</keyword>
<keyword id="KW-0677">Repeat</keyword>
<keyword id="KW-0690">Ribosome biogenesis</keyword>
<keyword id="KW-0698">rRNA processing</keyword>
<reference key="1">
    <citation type="journal article" date="2011" name="Genome Biol.">
        <title>Comparative and functional genomics provide insights into the pathogenicity of dermatophytic fungi.</title>
        <authorList>
            <person name="Burmester A."/>
            <person name="Shelest E."/>
            <person name="Gloeckner G."/>
            <person name="Heddergott C."/>
            <person name="Schindler S."/>
            <person name="Staib P."/>
            <person name="Heidel A."/>
            <person name="Felder M."/>
            <person name="Petzold A."/>
            <person name="Szafranski K."/>
            <person name="Feuermann M."/>
            <person name="Pedruzzi I."/>
            <person name="Priebe S."/>
            <person name="Groth M."/>
            <person name="Winkler R."/>
            <person name="Li W."/>
            <person name="Kniemeyer O."/>
            <person name="Schroeckh V."/>
            <person name="Hertweck C."/>
            <person name="Hube B."/>
            <person name="White T.C."/>
            <person name="Platzer M."/>
            <person name="Guthke R."/>
            <person name="Heitman J."/>
            <person name="Woestemeyer J."/>
            <person name="Zipfel P.F."/>
            <person name="Monod M."/>
            <person name="Brakhage A.A."/>
        </authorList>
    </citation>
    <scope>NUCLEOTIDE SEQUENCE [LARGE SCALE GENOMIC DNA]</scope>
    <source>
        <strain>ATCC MYA-4681 / CBS 112371</strain>
    </source>
</reference>
<dbReference type="EMBL" id="ABSU01000003">
    <property type="protein sequence ID" value="EFE35370.1"/>
    <property type="molecule type" value="Genomic_DNA"/>
</dbReference>
<dbReference type="RefSeq" id="XP_003016015.1">
    <property type="nucleotide sequence ID" value="XM_003015969.1"/>
</dbReference>
<dbReference type="SMR" id="D4AMF9"/>
<dbReference type="STRING" id="663331.D4AMF9"/>
<dbReference type="GeneID" id="9523923"/>
<dbReference type="KEGG" id="abe:ARB_05412"/>
<dbReference type="eggNOG" id="KOG2188">
    <property type="taxonomic scope" value="Eukaryota"/>
</dbReference>
<dbReference type="HOGENOM" id="CLU_008720_1_1_1"/>
<dbReference type="OMA" id="HHLVRNF"/>
<dbReference type="OrthoDB" id="392571at2759"/>
<dbReference type="Proteomes" id="UP000008866">
    <property type="component" value="Unassembled WGS sequence"/>
</dbReference>
<dbReference type="GO" id="GO:0030686">
    <property type="term" value="C:90S preribosome"/>
    <property type="evidence" value="ECO:0007669"/>
    <property type="project" value="TreeGrafter"/>
</dbReference>
<dbReference type="GO" id="GO:0005730">
    <property type="term" value="C:nucleolus"/>
    <property type="evidence" value="ECO:0007669"/>
    <property type="project" value="UniProtKB-SubCell"/>
</dbReference>
<dbReference type="GO" id="GO:0030688">
    <property type="term" value="C:preribosome, small subunit precursor"/>
    <property type="evidence" value="ECO:0007669"/>
    <property type="project" value="TreeGrafter"/>
</dbReference>
<dbReference type="GO" id="GO:0003723">
    <property type="term" value="F:RNA binding"/>
    <property type="evidence" value="ECO:0007669"/>
    <property type="project" value="InterPro"/>
</dbReference>
<dbReference type="GO" id="GO:0000480">
    <property type="term" value="P:endonucleolytic cleavage in 5'-ETS of tricistronic rRNA transcript (SSU-rRNA, 5.8S rRNA, LSU-rRNA)"/>
    <property type="evidence" value="ECO:0007669"/>
    <property type="project" value="TreeGrafter"/>
</dbReference>
<dbReference type="GO" id="GO:0000447">
    <property type="term" value="P:endonucleolytic cleavage in ITS1 to separate SSU-rRNA from 5.8S rRNA and LSU-rRNA from tricistronic rRNA transcript (SSU-rRNA, 5.8S rRNA, LSU-rRNA)"/>
    <property type="evidence" value="ECO:0007669"/>
    <property type="project" value="TreeGrafter"/>
</dbReference>
<dbReference type="GO" id="GO:0000472">
    <property type="term" value="P:endonucleolytic cleavage to generate mature 5'-end of SSU-rRNA from (SSU-rRNA, 5.8S rRNA, LSU-rRNA)"/>
    <property type="evidence" value="ECO:0007669"/>
    <property type="project" value="TreeGrafter"/>
</dbReference>
<dbReference type="GO" id="GO:0000056">
    <property type="term" value="P:ribosomal small subunit export from nucleus"/>
    <property type="evidence" value="ECO:0007669"/>
    <property type="project" value="TreeGrafter"/>
</dbReference>
<dbReference type="Gene3D" id="1.25.10.10">
    <property type="entry name" value="Leucine-rich Repeat Variant"/>
    <property type="match status" value="3"/>
</dbReference>
<dbReference type="InterPro" id="IPR011989">
    <property type="entry name" value="ARM-like"/>
</dbReference>
<dbReference type="InterPro" id="IPR016024">
    <property type="entry name" value="ARM-type_fold"/>
</dbReference>
<dbReference type="InterPro" id="IPR040000">
    <property type="entry name" value="NOP9"/>
</dbReference>
<dbReference type="InterPro" id="IPR001313">
    <property type="entry name" value="Pumilio_RNA-bd_rpt"/>
</dbReference>
<dbReference type="PANTHER" id="PTHR13102">
    <property type="entry name" value="NUCLEOLAR PROTEIN 9"/>
    <property type="match status" value="1"/>
</dbReference>
<dbReference type="PANTHER" id="PTHR13102:SF0">
    <property type="entry name" value="NUCLEOLAR PROTEIN 9"/>
    <property type="match status" value="1"/>
</dbReference>
<dbReference type="Pfam" id="PF22493">
    <property type="entry name" value="PUF_NOP9"/>
    <property type="match status" value="1"/>
</dbReference>
<dbReference type="SMART" id="SM00025">
    <property type="entry name" value="Pumilio"/>
    <property type="match status" value="5"/>
</dbReference>
<dbReference type="SUPFAM" id="SSF48371">
    <property type="entry name" value="ARM repeat"/>
    <property type="match status" value="2"/>
</dbReference>
<dbReference type="PROSITE" id="PS50302">
    <property type="entry name" value="PUM"/>
    <property type="match status" value="6"/>
</dbReference>
<gene>
    <name type="primary">NOP9</name>
    <name type="ORF">ARB_05412</name>
</gene>
<comment type="function">
    <text evidence="1">RNA-binding nucleolar protein required for pre-rRNA processing. Involved in production of 18S rRNA and assembly of small ribosomal subunit (By similarity).</text>
</comment>
<comment type="subcellular location">
    <subcellularLocation>
        <location evidence="1">Nucleus</location>
        <location evidence="1">Nucleolus</location>
    </subcellularLocation>
</comment>
<comment type="similarity">
    <text evidence="3">Belongs to the NOP9 family.</text>
</comment>
<feature type="chain" id="PRO_0000407793" description="Nucleolar protein 9">
    <location>
        <begin position="1"/>
        <end position="716"/>
    </location>
</feature>
<feature type="repeat" description="Pumilio 1">
    <location>
        <begin position="110"/>
        <end position="145"/>
    </location>
</feature>
<feature type="repeat" description="Pumilio 2">
    <location>
        <begin position="305"/>
        <end position="342"/>
    </location>
</feature>
<feature type="repeat" description="Pumilio 3">
    <location>
        <begin position="361"/>
        <end position="396"/>
    </location>
</feature>
<feature type="repeat" description="Pumilio 4">
    <location>
        <begin position="397"/>
        <end position="433"/>
    </location>
</feature>
<feature type="repeat" description="Pumilio 5">
    <location>
        <begin position="534"/>
        <end position="575"/>
    </location>
</feature>
<feature type="repeat" description="Pumilio 6">
    <location>
        <begin position="576"/>
        <end position="613"/>
    </location>
</feature>
<feature type="region of interest" description="Disordered" evidence="2">
    <location>
        <begin position="1"/>
        <end position="70"/>
    </location>
</feature>
<feature type="region of interest" description="Disordered" evidence="2">
    <location>
        <begin position="179"/>
        <end position="204"/>
    </location>
</feature>
<feature type="region of interest" description="Disordered" evidence="2">
    <location>
        <begin position="656"/>
        <end position="716"/>
    </location>
</feature>
<feature type="compositionally biased region" description="Basic residues" evidence="2">
    <location>
        <begin position="1"/>
        <end position="11"/>
    </location>
</feature>
<feature type="compositionally biased region" description="Basic and acidic residues" evidence="2">
    <location>
        <begin position="12"/>
        <end position="37"/>
    </location>
</feature>
<feature type="compositionally biased region" description="Basic and acidic residues" evidence="2">
    <location>
        <begin position="52"/>
        <end position="61"/>
    </location>
</feature>
<feature type="compositionally biased region" description="Polar residues" evidence="2">
    <location>
        <begin position="657"/>
        <end position="666"/>
    </location>
</feature>
<feature type="compositionally biased region" description="Basic and acidic residues" evidence="2">
    <location>
        <begin position="687"/>
        <end position="699"/>
    </location>
</feature>